<protein>
    <recommendedName>
        <fullName>High osmolarity signaling protein SHO1</fullName>
    </recommendedName>
    <alternativeName>
        <fullName>Osmosensor SHO1</fullName>
    </alternativeName>
</protein>
<dbReference type="EMBL" id="CU633872">
    <property type="protein sequence ID" value="CAP65583.1"/>
    <property type="molecule type" value="Genomic_DNA"/>
</dbReference>
<dbReference type="EMBL" id="FO904941">
    <property type="protein sequence ID" value="CDP31577.1"/>
    <property type="molecule type" value="Genomic_DNA"/>
</dbReference>
<dbReference type="RefSeq" id="XP_003437498.1">
    <property type="nucleotide sequence ID" value="XM_003437450.1"/>
</dbReference>
<dbReference type="SMR" id="B2ANF9"/>
<dbReference type="FunCoup" id="B2ANF9">
    <property type="interactions" value="131"/>
</dbReference>
<dbReference type="STRING" id="515849.B2ANF9"/>
<dbReference type="GlyCosmos" id="B2ANF9">
    <property type="glycosylation" value="1 site, No reported glycans"/>
</dbReference>
<dbReference type="GeneID" id="11176339"/>
<dbReference type="KEGG" id="pan:PODANS72p284"/>
<dbReference type="VEuPathDB" id="FungiDB:PODANS_6_10750"/>
<dbReference type="eggNOG" id="ENOG502QW7A">
    <property type="taxonomic scope" value="Eukaryota"/>
</dbReference>
<dbReference type="HOGENOM" id="CLU_043316_1_0_1"/>
<dbReference type="InParanoid" id="B2ANF9"/>
<dbReference type="OrthoDB" id="5983572at2759"/>
<dbReference type="Proteomes" id="UP000001197">
    <property type="component" value="Chromosome 6"/>
</dbReference>
<dbReference type="GO" id="GO:0005886">
    <property type="term" value="C:plasma membrane"/>
    <property type="evidence" value="ECO:0007669"/>
    <property type="project" value="UniProtKB-SubCell"/>
</dbReference>
<dbReference type="GO" id="GO:0030833">
    <property type="term" value="P:regulation of actin filament polymerization"/>
    <property type="evidence" value="ECO:0007669"/>
    <property type="project" value="TreeGrafter"/>
</dbReference>
<dbReference type="CDD" id="cd11855">
    <property type="entry name" value="SH3_Sho1p"/>
    <property type="match status" value="1"/>
</dbReference>
<dbReference type="FunFam" id="2.30.30.40:FF:000213">
    <property type="entry name" value="High osmolarity signaling protein SHO1"/>
    <property type="match status" value="1"/>
</dbReference>
<dbReference type="Gene3D" id="2.30.30.40">
    <property type="entry name" value="SH3 Domains"/>
    <property type="match status" value="1"/>
</dbReference>
<dbReference type="InterPro" id="IPR036028">
    <property type="entry name" value="SH3-like_dom_sf"/>
</dbReference>
<dbReference type="InterPro" id="IPR001452">
    <property type="entry name" value="SH3_domain"/>
</dbReference>
<dbReference type="InterPro" id="IPR035522">
    <property type="entry name" value="Sho1_SH3"/>
</dbReference>
<dbReference type="PANTHER" id="PTHR15735">
    <property type="entry name" value="FCH AND DOUBLE SH3 DOMAINS PROTEIN"/>
    <property type="match status" value="1"/>
</dbReference>
<dbReference type="PANTHER" id="PTHR15735:SF20">
    <property type="entry name" value="HIGH OSMOLARITY SIGNALING PROTEIN SHO1"/>
    <property type="match status" value="1"/>
</dbReference>
<dbReference type="Pfam" id="PF00018">
    <property type="entry name" value="SH3_1"/>
    <property type="match status" value="1"/>
</dbReference>
<dbReference type="PRINTS" id="PR00452">
    <property type="entry name" value="SH3DOMAIN"/>
</dbReference>
<dbReference type="SMART" id="SM00326">
    <property type="entry name" value="SH3"/>
    <property type="match status" value="1"/>
</dbReference>
<dbReference type="SUPFAM" id="SSF50044">
    <property type="entry name" value="SH3-domain"/>
    <property type="match status" value="1"/>
</dbReference>
<dbReference type="PROSITE" id="PS50002">
    <property type="entry name" value="SH3"/>
    <property type="match status" value="1"/>
</dbReference>
<reference key="1">
    <citation type="journal article" date="2008" name="Genome Biol.">
        <title>The genome sequence of the model ascomycete fungus Podospora anserina.</title>
        <authorList>
            <person name="Espagne E."/>
            <person name="Lespinet O."/>
            <person name="Malagnac F."/>
            <person name="Da Silva C."/>
            <person name="Jaillon O."/>
            <person name="Porcel B.M."/>
            <person name="Couloux A."/>
            <person name="Aury J.-M."/>
            <person name="Segurens B."/>
            <person name="Poulain J."/>
            <person name="Anthouard V."/>
            <person name="Grossetete S."/>
            <person name="Khalili H."/>
            <person name="Coppin E."/>
            <person name="Dequard-Chablat M."/>
            <person name="Picard M."/>
            <person name="Contamine V."/>
            <person name="Arnaise S."/>
            <person name="Bourdais A."/>
            <person name="Berteaux-Lecellier V."/>
            <person name="Gautheret D."/>
            <person name="de Vries R.P."/>
            <person name="Battaglia E."/>
            <person name="Coutinho P.M."/>
            <person name="Danchin E.G.J."/>
            <person name="Henrissat B."/>
            <person name="El Khoury R."/>
            <person name="Sainsard-Chanet A."/>
            <person name="Boivin A."/>
            <person name="Pinan-Lucarre B."/>
            <person name="Sellem C.H."/>
            <person name="Debuchy R."/>
            <person name="Wincker P."/>
            <person name="Weissenbach J."/>
            <person name="Silar P."/>
        </authorList>
    </citation>
    <scope>NUCLEOTIDE SEQUENCE [LARGE SCALE GENOMIC DNA]</scope>
    <source>
        <strain>S / ATCC MYA-4624 / DSM 980 / FGSC 10383</strain>
    </source>
</reference>
<reference key="2">
    <citation type="journal article" date="2014" name="Genetics">
        <title>Maintaining two mating types: Structure of the mating type locus and its role in heterokaryosis in Podospora anserina.</title>
        <authorList>
            <person name="Grognet P."/>
            <person name="Bidard F."/>
            <person name="Kuchly C."/>
            <person name="Tong L.C.H."/>
            <person name="Coppin E."/>
            <person name="Benkhali J.A."/>
            <person name="Couloux A."/>
            <person name="Wincker P."/>
            <person name="Debuchy R."/>
            <person name="Silar P."/>
        </authorList>
    </citation>
    <scope>GENOME REANNOTATION</scope>
    <source>
        <strain>S / ATCC MYA-4624 / DSM 980 / FGSC 10383</strain>
    </source>
</reference>
<name>SHO1_PODAN</name>
<keyword id="KW-1003">Cell membrane</keyword>
<keyword id="KW-0325">Glycoprotein</keyword>
<keyword id="KW-0472">Membrane</keyword>
<keyword id="KW-1185">Reference proteome</keyword>
<keyword id="KW-0728">SH3 domain</keyword>
<keyword id="KW-0346">Stress response</keyword>
<keyword id="KW-0812">Transmembrane</keyword>
<keyword id="KW-1133">Transmembrane helix</keyword>
<feature type="chain" id="PRO_0000410394" description="High osmolarity signaling protein SHO1">
    <location>
        <begin position="1"/>
        <end position="317"/>
    </location>
</feature>
<feature type="topological domain" description="Cytoplasmic" evidence="2">
    <location>
        <begin position="1"/>
        <end position="36"/>
    </location>
</feature>
<feature type="transmembrane region" description="Helical" evidence="2">
    <location>
        <begin position="37"/>
        <end position="57"/>
    </location>
</feature>
<feature type="topological domain" description="Extracellular" evidence="2">
    <location>
        <begin position="58"/>
        <end position="75"/>
    </location>
</feature>
<feature type="transmembrane region" description="Helical" evidence="2">
    <location>
        <begin position="76"/>
        <end position="96"/>
    </location>
</feature>
<feature type="topological domain" description="Cytoplasmic" evidence="2">
    <location>
        <begin position="97"/>
        <end position="106"/>
    </location>
</feature>
<feature type="transmembrane region" description="Helical" evidence="2">
    <location>
        <begin position="107"/>
        <end position="127"/>
    </location>
</feature>
<feature type="topological domain" description="Extracellular" evidence="2">
    <location>
        <begin position="128"/>
        <end position="135"/>
    </location>
</feature>
<feature type="transmembrane region" description="Helical" evidence="2">
    <location>
        <begin position="136"/>
        <end position="156"/>
    </location>
</feature>
<feature type="topological domain" description="Cytoplasmic" evidence="2">
    <location>
        <begin position="157"/>
        <end position="317"/>
    </location>
</feature>
<feature type="domain" description="SH3" evidence="3">
    <location>
        <begin position="258"/>
        <end position="317"/>
    </location>
</feature>
<feature type="region of interest" description="Disordered" evidence="4">
    <location>
        <begin position="207"/>
        <end position="257"/>
    </location>
</feature>
<feature type="compositionally biased region" description="Polar residues" evidence="4">
    <location>
        <begin position="235"/>
        <end position="246"/>
    </location>
</feature>
<feature type="glycosylation site" description="N-linked (GlcNAc...) asparagine" evidence="2">
    <location>
        <position position="71"/>
    </location>
</feature>
<accession>B2ANF9</accession>
<accession>A0A090CWD1</accession>
<organism>
    <name type="scientific">Podospora anserina (strain S / ATCC MYA-4624 / DSM 980 / FGSC 10383)</name>
    <name type="common">Pleurage anserina</name>
    <dbReference type="NCBI Taxonomy" id="515849"/>
    <lineage>
        <taxon>Eukaryota</taxon>
        <taxon>Fungi</taxon>
        <taxon>Dikarya</taxon>
        <taxon>Ascomycota</taxon>
        <taxon>Pezizomycotina</taxon>
        <taxon>Sordariomycetes</taxon>
        <taxon>Sordariomycetidae</taxon>
        <taxon>Sordariales</taxon>
        <taxon>Podosporaceae</taxon>
        <taxon>Podospora</taxon>
        <taxon>Podospora anserina</taxon>
    </lineage>
</organism>
<gene>
    <name type="primary">SHO1</name>
    <name type="ordered locus">Pa_6_10750</name>
    <name type="ORF">PODANS_6_10750</name>
</gene>
<sequence length="317" mass="34425">MPNYGSLHSPSLRKMEQSRIQYGRKRLSLGNIIGDPFALATISIAFLAWIISFFGSLFAHINQPPNTPGVNNSFPLYTWWAVVFYFFLVVGVFIVVASDSVQTYHVAIVGYLGCGLVLSTSAVHGLIYSNIGSREAAAAGMILLAMVTIVWIFYFGSAPSAVPRAYIDSFALAKESSTNRQTMNTGYGIGRPETSTSVQPPQMYTAQLNGLENPSPVGGMQSSGMRNSAVPPPFQSTLGQKSNGLPGSSDGDIAPPTEYPYRAKAIYSYEANPEDANEISFQKHEILEVSDVSGRWWQARKENGDTGIAPSNYLILL</sequence>
<proteinExistence type="inferred from homology"/>
<comment type="function">
    <text evidence="1">Plasma membrane osmosensor that activates the high osmolarity glycerol (HOG) MAPK signaling pathway in response to high osmolarity.</text>
</comment>
<comment type="subunit">
    <text evidence="1">Forms homooligomers.</text>
</comment>
<comment type="subcellular location">
    <subcellularLocation>
        <location evidence="1">Cell membrane</location>
        <topology evidence="1">Multi-pass membrane protein</topology>
    </subcellularLocation>
</comment>
<comment type="similarity">
    <text evidence="5">Belongs to the SHO1 family.</text>
</comment>
<evidence type="ECO:0000250" key="1"/>
<evidence type="ECO:0000255" key="2"/>
<evidence type="ECO:0000255" key="3">
    <source>
        <dbReference type="PROSITE-ProRule" id="PRU00192"/>
    </source>
</evidence>
<evidence type="ECO:0000256" key="4">
    <source>
        <dbReference type="SAM" id="MobiDB-lite"/>
    </source>
</evidence>
<evidence type="ECO:0000305" key="5"/>